<proteinExistence type="inferred from homology"/>
<reference key="1">
    <citation type="journal article" date="1996" name="J. Mol. Evol.">
        <title>The complete mitochondrial DNA (mtDNA) of the donkey and mtDNA comparisons among four closely related mammalian species-pairs.</title>
        <authorList>
            <person name="Xu X."/>
            <person name="Gullberg A."/>
            <person name="Arnason U."/>
        </authorList>
    </citation>
    <scope>NUCLEOTIDE SEQUENCE [GENOMIC DNA]</scope>
    <source>
        <tissue>Kidney</tissue>
    </source>
</reference>
<comment type="function">
    <text evidence="1">Core subunit of the mitochondrial membrane respiratory chain NADH dehydrogenase (Complex I) which catalyzes electron transfer from NADH through the respiratory chain, using ubiquinone as an electron acceptor. Part of the enzyme membrane arm which is embedded in the lipid bilayer and involved in proton translocation.</text>
</comment>
<comment type="catalytic activity">
    <reaction evidence="1">
        <text>a ubiquinone + NADH + 5 H(+)(in) = a ubiquinol + NAD(+) + 4 H(+)(out)</text>
        <dbReference type="Rhea" id="RHEA:29091"/>
        <dbReference type="Rhea" id="RHEA-COMP:9565"/>
        <dbReference type="Rhea" id="RHEA-COMP:9566"/>
        <dbReference type="ChEBI" id="CHEBI:15378"/>
        <dbReference type="ChEBI" id="CHEBI:16389"/>
        <dbReference type="ChEBI" id="CHEBI:17976"/>
        <dbReference type="ChEBI" id="CHEBI:57540"/>
        <dbReference type="ChEBI" id="CHEBI:57945"/>
        <dbReference type="EC" id="7.1.1.2"/>
    </reaction>
    <physiologicalReaction direction="left-to-right" evidence="1">
        <dbReference type="Rhea" id="RHEA:29092"/>
    </physiologicalReaction>
</comment>
<comment type="subunit">
    <text evidence="2">Core subunit of respiratory chain NADH dehydrogenase (Complex I) which is composed of 45 different subunits.</text>
</comment>
<comment type="subcellular location">
    <subcellularLocation>
        <location evidence="2">Mitochondrion inner membrane</location>
        <topology evidence="3">Multi-pass membrane protein</topology>
    </subcellularLocation>
</comment>
<comment type="similarity">
    <text evidence="4">Belongs to the complex I subunit 4L family.</text>
</comment>
<feature type="chain" id="PRO_0000118422" description="NADH-ubiquinone oxidoreductase chain 4L">
    <location>
        <begin position="1"/>
        <end position="98"/>
    </location>
</feature>
<feature type="transmembrane region" description="Helical" evidence="3">
    <location>
        <begin position="1"/>
        <end position="21"/>
    </location>
</feature>
<feature type="transmembrane region" description="Helical" evidence="3">
    <location>
        <begin position="25"/>
        <end position="45"/>
    </location>
</feature>
<feature type="transmembrane region" description="Helical" evidence="3">
    <location>
        <begin position="59"/>
        <end position="81"/>
    </location>
</feature>
<accession>P92483</accession>
<name>NU4LM_EQUAS</name>
<gene>
    <name type="primary">MT-ND4L</name>
    <name type="synonym">MTND4L</name>
    <name type="synonym">NADH4L</name>
    <name type="synonym">ND4L</name>
</gene>
<organism>
    <name type="scientific">Equus asinus</name>
    <name type="common">Donkey</name>
    <name type="synonym">Equus africanus asinus</name>
    <dbReference type="NCBI Taxonomy" id="9793"/>
    <lineage>
        <taxon>Eukaryota</taxon>
        <taxon>Metazoa</taxon>
        <taxon>Chordata</taxon>
        <taxon>Craniata</taxon>
        <taxon>Vertebrata</taxon>
        <taxon>Euteleostomi</taxon>
        <taxon>Mammalia</taxon>
        <taxon>Eutheria</taxon>
        <taxon>Laurasiatheria</taxon>
        <taxon>Perissodactyla</taxon>
        <taxon>Equidae</taxon>
        <taxon>Equus</taxon>
    </lineage>
</organism>
<protein>
    <recommendedName>
        <fullName>NADH-ubiquinone oxidoreductase chain 4L</fullName>
        <ecNumber>7.1.1.2</ecNumber>
    </recommendedName>
    <alternativeName>
        <fullName>NADH dehydrogenase subunit 4L</fullName>
    </alternativeName>
</protein>
<sequence>MSLAHINIFLAFTVSLVGLLMYRSHLMSSLLCLEGMMLSLFVMATMVVLNTHFTLASMMPIILLVFAACERALGLSLLVMVSNTYGVDHVQNLNLLQC</sequence>
<dbReference type="EC" id="7.1.1.2"/>
<dbReference type="EMBL" id="X97337">
    <property type="protein sequence ID" value="CAA66022.1"/>
    <property type="molecule type" value="Genomic_DNA"/>
</dbReference>
<dbReference type="PIR" id="T11371">
    <property type="entry name" value="T11371"/>
</dbReference>
<dbReference type="RefSeq" id="NP_007389.1">
    <property type="nucleotide sequence ID" value="NC_001788.1"/>
</dbReference>
<dbReference type="SMR" id="P92483"/>
<dbReference type="GeneID" id="808056"/>
<dbReference type="KEGG" id="eai:808056"/>
<dbReference type="CTD" id="4539"/>
<dbReference type="Proteomes" id="UP000694387">
    <property type="component" value="Mitochondrion MT"/>
</dbReference>
<dbReference type="GO" id="GO:0005743">
    <property type="term" value="C:mitochondrial inner membrane"/>
    <property type="evidence" value="ECO:0000250"/>
    <property type="project" value="UniProtKB"/>
</dbReference>
<dbReference type="GO" id="GO:0045271">
    <property type="term" value="C:respiratory chain complex I"/>
    <property type="evidence" value="ECO:0000250"/>
    <property type="project" value="UniProtKB"/>
</dbReference>
<dbReference type="GO" id="GO:0008137">
    <property type="term" value="F:NADH dehydrogenase (ubiquinone) activity"/>
    <property type="evidence" value="ECO:0000250"/>
    <property type="project" value="UniProtKB"/>
</dbReference>
<dbReference type="GO" id="GO:0042773">
    <property type="term" value="P:ATP synthesis coupled electron transport"/>
    <property type="evidence" value="ECO:0007669"/>
    <property type="project" value="InterPro"/>
</dbReference>
<dbReference type="FunFam" id="1.10.287.3510:FF:000002">
    <property type="entry name" value="NADH-ubiquinone oxidoreductase chain 4L"/>
    <property type="match status" value="1"/>
</dbReference>
<dbReference type="Gene3D" id="1.10.287.3510">
    <property type="match status" value="1"/>
</dbReference>
<dbReference type="InterPro" id="IPR001133">
    <property type="entry name" value="NADH_UbQ_OxRdtase_chain4L/K"/>
</dbReference>
<dbReference type="InterPro" id="IPR039428">
    <property type="entry name" value="NUOK/Mnh_C1-like"/>
</dbReference>
<dbReference type="PANTHER" id="PTHR11434:SF0">
    <property type="entry name" value="NADH-UBIQUINONE OXIDOREDUCTASE CHAIN 4L"/>
    <property type="match status" value="1"/>
</dbReference>
<dbReference type="PANTHER" id="PTHR11434">
    <property type="entry name" value="NADH-UBIQUINONE OXIDOREDUCTASE SUBUNIT ND4L"/>
    <property type="match status" value="1"/>
</dbReference>
<dbReference type="Pfam" id="PF00420">
    <property type="entry name" value="Oxidored_q2"/>
    <property type="match status" value="1"/>
</dbReference>
<keyword id="KW-0249">Electron transport</keyword>
<keyword id="KW-0472">Membrane</keyword>
<keyword id="KW-0496">Mitochondrion</keyword>
<keyword id="KW-0999">Mitochondrion inner membrane</keyword>
<keyword id="KW-0520">NAD</keyword>
<keyword id="KW-1185">Reference proteome</keyword>
<keyword id="KW-0679">Respiratory chain</keyword>
<keyword id="KW-1278">Translocase</keyword>
<keyword id="KW-0812">Transmembrane</keyword>
<keyword id="KW-1133">Transmembrane helix</keyword>
<keyword id="KW-0813">Transport</keyword>
<keyword id="KW-0830">Ubiquinone</keyword>
<geneLocation type="mitochondrion"/>
<evidence type="ECO:0000250" key="1">
    <source>
        <dbReference type="UniProtKB" id="P03901"/>
    </source>
</evidence>
<evidence type="ECO:0000250" key="2">
    <source>
        <dbReference type="UniProtKB" id="P03902"/>
    </source>
</evidence>
<evidence type="ECO:0000255" key="3"/>
<evidence type="ECO:0000305" key="4"/>